<feature type="chain" id="PRO_0000214417" description="FAD assembly factor SdhE">
    <location>
        <begin position="1"/>
        <end position="93"/>
    </location>
</feature>
<accession>Q4FQX4</accession>
<dbReference type="EMBL" id="CP000082">
    <property type="protein sequence ID" value="AAZ19584.1"/>
    <property type="molecule type" value="Genomic_DNA"/>
</dbReference>
<dbReference type="RefSeq" id="WP_011280997.1">
    <property type="nucleotide sequence ID" value="NC_007204.1"/>
</dbReference>
<dbReference type="SMR" id="Q4FQX4"/>
<dbReference type="STRING" id="259536.Psyc_1736"/>
<dbReference type="KEGG" id="par:Psyc_1736"/>
<dbReference type="eggNOG" id="COG2938">
    <property type="taxonomic scope" value="Bacteria"/>
</dbReference>
<dbReference type="HOGENOM" id="CLU_103054_2_0_6"/>
<dbReference type="OrthoDB" id="9180899at2"/>
<dbReference type="Proteomes" id="UP000000546">
    <property type="component" value="Chromosome"/>
</dbReference>
<dbReference type="GO" id="GO:0005737">
    <property type="term" value="C:cytoplasm"/>
    <property type="evidence" value="ECO:0007669"/>
    <property type="project" value="UniProtKB-SubCell"/>
</dbReference>
<dbReference type="GO" id="GO:0006105">
    <property type="term" value="P:succinate metabolic process"/>
    <property type="evidence" value="ECO:0007669"/>
    <property type="project" value="TreeGrafter"/>
</dbReference>
<dbReference type="Gene3D" id="1.10.150.250">
    <property type="entry name" value="Flavinator of succinate dehydrogenase"/>
    <property type="match status" value="1"/>
</dbReference>
<dbReference type="InterPro" id="IPR005631">
    <property type="entry name" value="SDH"/>
</dbReference>
<dbReference type="InterPro" id="IPR036714">
    <property type="entry name" value="SDH_sf"/>
</dbReference>
<dbReference type="InterPro" id="IPR050531">
    <property type="entry name" value="SdhE_FAD_assembly_factor"/>
</dbReference>
<dbReference type="PANTHER" id="PTHR39585">
    <property type="entry name" value="FAD ASSEMBLY FACTOR SDHE"/>
    <property type="match status" value="1"/>
</dbReference>
<dbReference type="PANTHER" id="PTHR39585:SF1">
    <property type="entry name" value="FAD ASSEMBLY FACTOR SDHE"/>
    <property type="match status" value="1"/>
</dbReference>
<dbReference type="Pfam" id="PF03937">
    <property type="entry name" value="Sdh5"/>
    <property type="match status" value="1"/>
</dbReference>
<dbReference type="SUPFAM" id="SSF109910">
    <property type="entry name" value="YgfY-like"/>
    <property type="match status" value="1"/>
</dbReference>
<proteinExistence type="inferred from homology"/>
<keyword id="KW-0143">Chaperone</keyword>
<keyword id="KW-0963">Cytoplasm</keyword>
<keyword id="KW-1185">Reference proteome</keyword>
<name>SDHE_PSYA2</name>
<gene>
    <name type="primary">sdhE</name>
    <name type="ordered locus">Psyc_1736</name>
</gene>
<evidence type="ECO:0000250" key="1">
    <source>
        <dbReference type="UniProtKB" id="G4V4G2"/>
    </source>
</evidence>
<evidence type="ECO:0000305" key="2"/>
<protein>
    <recommendedName>
        <fullName>FAD assembly factor SdhE</fullName>
    </recommendedName>
</protein>
<reference key="1">
    <citation type="journal article" date="2010" name="Appl. Environ. Microbiol.">
        <title>The genome sequence of Psychrobacter arcticus 273-4, a psychroactive Siberian permafrost bacterium, reveals mechanisms for adaptation to low-temperature growth.</title>
        <authorList>
            <person name="Ayala-del-Rio H.L."/>
            <person name="Chain P.S."/>
            <person name="Grzymski J.J."/>
            <person name="Ponder M.A."/>
            <person name="Ivanova N."/>
            <person name="Bergholz P.W."/>
            <person name="Di Bartolo G."/>
            <person name="Hauser L."/>
            <person name="Land M."/>
            <person name="Bakermans C."/>
            <person name="Rodrigues D."/>
            <person name="Klappenbach J."/>
            <person name="Zarka D."/>
            <person name="Larimer F."/>
            <person name="Richardson P."/>
            <person name="Murray A."/>
            <person name="Thomashow M."/>
            <person name="Tiedje J.M."/>
        </authorList>
    </citation>
    <scope>NUCLEOTIDE SEQUENCE [LARGE SCALE GENOMIC DNA]</scope>
    <source>
        <strain>DSM 17307 / VKM B-2377 / 273-4</strain>
    </source>
</reference>
<comment type="function">
    <text evidence="1">An FAD assembly protein, which accelerates covalent attachment of the cofactor into other proteins. Plays an essential role in the assembly of succinate dehydrogenase (SDH, respiratory complex II), an enzyme complex that is a component of both the tricarboxylic acid cycle and the electron transport chain, and which couples the oxidation of succinate to fumarate with the reduction of ubiquinone (coenzyme Q) to ubiquinol. Required for flavinylation (covalent attachment of FAD) of the flavoprotein subunit SdhA of SDH and other flavinylated proteins as well.</text>
</comment>
<comment type="subcellular location">
    <subcellularLocation>
        <location evidence="1">Cytoplasm</location>
    </subcellularLocation>
</comment>
<comment type="similarity">
    <text evidence="2">Belongs to the SdhE FAD assembly factor family.</text>
</comment>
<sequence length="93" mass="11127">MTINNQPEPTNEQRRIIYQARRGLKELDFYFEPYIKELYLTAEAAEQESFAQMLTHEDPDLLDYFTNQSRPEDDAMWALVNKIKTWRHSKSLS</sequence>
<organism>
    <name type="scientific">Psychrobacter arcticus (strain DSM 17307 / VKM B-2377 / 273-4)</name>
    <dbReference type="NCBI Taxonomy" id="259536"/>
    <lineage>
        <taxon>Bacteria</taxon>
        <taxon>Pseudomonadati</taxon>
        <taxon>Pseudomonadota</taxon>
        <taxon>Gammaproteobacteria</taxon>
        <taxon>Moraxellales</taxon>
        <taxon>Moraxellaceae</taxon>
        <taxon>Psychrobacter</taxon>
    </lineage>
</organism>